<protein>
    <recommendedName>
        <fullName evidence="1">Arginine--tRNA ligase</fullName>
        <ecNumber evidence="1">6.1.1.19</ecNumber>
    </recommendedName>
    <alternativeName>
        <fullName evidence="1">Arginyl-tRNA synthetase</fullName>
        <shortName evidence="1">ArgRS</shortName>
    </alternativeName>
</protein>
<keyword id="KW-0030">Aminoacyl-tRNA synthetase</keyword>
<keyword id="KW-0067">ATP-binding</keyword>
<keyword id="KW-0963">Cytoplasm</keyword>
<keyword id="KW-0436">Ligase</keyword>
<keyword id="KW-0547">Nucleotide-binding</keyword>
<keyword id="KW-0648">Protein biosynthesis</keyword>
<accession>A8EXD2</accession>
<evidence type="ECO:0000255" key="1">
    <source>
        <dbReference type="HAMAP-Rule" id="MF_00123"/>
    </source>
</evidence>
<name>SYR_RICCK</name>
<comment type="catalytic activity">
    <reaction evidence="1">
        <text>tRNA(Arg) + L-arginine + ATP = L-arginyl-tRNA(Arg) + AMP + diphosphate</text>
        <dbReference type="Rhea" id="RHEA:20301"/>
        <dbReference type="Rhea" id="RHEA-COMP:9658"/>
        <dbReference type="Rhea" id="RHEA-COMP:9673"/>
        <dbReference type="ChEBI" id="CHEBI:30616"/>
        <dbReference type="ChEBI" id="CHEBI:32682"/>
        <dbReference type="ChEBI" id="CHEBI:33019"/>
        <dbReference type="ChEBI" id="CHEBI:78442"/>
        <dbReference type="ChEBI" id="CHEBI:78513"/>
        <dbReference type="ChEBI" id="CHEBI:456215"/>
        <dbReference type="EC" id="6.1.1.19"/>
    </reaction>
</comment>
<comment type="subunit">
    <text evidence="1">Monomer.</text>
</comment>
<comment type="subcellular location">
    <subcellularLocation>
        <location evidence="1">Cytoplasm</location>
    </subcellularLocation>
</comment>
<comment type="similarity">
    <text evidence="1">Belongs to the class-I aminoacyl-tRNA synthetase family.</text>
</comment>
<dbReference type="EC" id="6.1.1.19" evidence="1"/>
<dbReference type="EMBL" id="CP000409">
    <property type="protein sequence ID" value="ABV73015.1"/>
    <property type="molecule type" value="Genomic_DNA"/>
</dbReference>
<dbReference type="RefSeq" id="WP_012148216.1">
    <property type="nucleotide sequence ID" value="NC_009879.1"/>
</dbReference>
<dbReference type="SMR" id="A8EXD2"/>
<dbReference type="STRING" id="293613.A1E_00310"/>
<dbReference type="KEGG" id="rcm:A1E_00310"/>
<dbReference type="eggNOG" id="COG0018">
    <property type="taxonomic scope" value="Bacteria"/>
</dbReference>
<dbReference type="HOGENOM" id="CLU_006406_0_1_5"/>
<dbReference type="Proteomes" id="UP000007056">
    <property type="component" value="Chromosome"/>
</dbReference>
<dbReference type="GO" id="GO:0005737">
    <property type="term" value="C:cytoplasm"/>
    <property type="evidence" value="ECO:0007669"/>
    <property type="project" value="UniProtKB-SubCell"/>
</dbReference>
<dbReference type="GO" id="GO:0004814">
    <property type="term" value="F:arginine-tRNA ligase activity"/>
    <property type="evidence" value="ECO:0007669"/>
    <property type="project" value="UniProtKB-UniRule"/>
</dbReference>
<dbReference type="GO" id="GO:0005524">
    <property type="term" value="F:ATP binding"/>
    <property type="evidence" value="ECO:0007669"/>
    <property type="project" value="UniProtKB-UniRule"/>
</dbReference>
<dbReference type="GO" id="GO:0006420">
    <property type="term" value="P:arginyl-tRNA aminoacylation"/>
    <property type="evidence" value="ECO:0007669"/>
    <property type="project" value="UniProtKB-UniRule"/>
</dbReference>
<dbReference type="CDD" id="cd00671">
    <property type="entry name" value="ArgRS_core"/>
    <property type="match status" value="1"/>
</dbReference>
<dbReference type="Gene3D" id="3.30.1360.70">
    <property type="entry name" value="Arginyl tRNA synthetase N-terminal domain"/>
    <property type="match status" value="1"/>
</dbReference>
<dbReference type="Gene3D" id="3.40.50.620">
    <property type="entry name" value="HUPs"/>
    <property type="match status" value="1"/>
</dbReference>
<dbReference type="Gene3D" id="1.10.730.10">
    <property type="entry name" value="Isoleucyl-tRNA Synthetase, Domain 1"/>
    <property type="match status" value="1"/>
</dbReference>
<dbReference type="HAMAP" id="MF_00123">
    <property type="entry name" value="Arg_tRNA_synth"/>
    <property type="match status" value="1"/>
</dbReference>
<dbReference type="InterPro" id="IPR001412">
    <property type="entry name" value="aa-tRNA-synth_I_CS"/>
</dbReference>
<dbReference type="InterPro" id="IPR001278">
    <property type="entry name" value="Arg-tRNA-ligase"/>
</dbReference>
<dbReference type="InterPro" id="IPR005148">
    <property type="entry name" value="Arg-tRNA-synth_N"/>
</dbReference>
<dbReference type="InterPro" id="IPR036695">
    <property type="entry name" value="Arg-tRNA-synth_N_sf"/>
</dbReference>
<dbReference type="InterPro" id="IPR035684">
    <property type="entry name" value="ArgRS_core"/>
</dbReference>
<dbReference type="InterPro" id="IPR008909">
    <property type="entry name" value="DALR_anticod-bd"/>
</dbReference>
<dbReference type="InterPro" id="IPR014729">
    <property type="entry name" value="Rossmann-like_a/b/a_fold"/>
</dbReference>
<dbReference type="InterPro" id="IPR009080">
    <property type="entry name" value="tRNAsynth_Ia_anticodon-bd"/>
</dbReference>
<dbReference type="NCBIfam" id="TIGR00456">
    <property type="entry name" value="argS"/>
    <property type="match status" value="1"/>
</dbReference>
<dbReference type="PANTHER" id="PTHR11956:SF5">
    <property type="entry name" value="ARGININE--TRNA LIGASE, CYTOPLASMIC"/>
    <property type="match status" value="1"/>
</dbReference>
<dbReference type="PANTHER" id="PTHR11956">
    <property type="entry name" value="ARGINYL-TRNA SYNTHETASE"/>
    <property type="match status" value="1"/>
</dbReference>
<dbReference type="Pfam" id="PF03485">
    <property type="entry name" value="Arg_tRNA_synt_N"/>
    <property type="match status" value="1"/>
</dbReference>
<dbReference type="Pfam" id="PF05746">
    <property type="entry name" value="DALR_1"/>
    <property type="match status" value="1"/>
</dbReference>
<dbReference type="Pfam" id="PF00750">
    <property type="entry name" value="tRNA-synt_1d"/>
    <property type="match status" value="1"/>
</dbReference>
<dbReference type="PRINTS" id="PR01038">
    <property type="entry name" value="TRNASYNTHARG"/>
</dbReference>
<dbReference type="SMART" id="SM01016">
    <property type="entry name" value="Arg_tRNA_synt_N"/>
    <property type="match status" value="1"/>
</dbReference>
<dbReference type="SMART" id="SM00836">
    <property type="entry name" value="DALR_1"/>
    <property type="match status" value="1"/>
</dbReference>
<dbReference type="SUPFAM" id="SSF47323">
    <property type="entry name" value="Anticodon-binding domain of a subclass of class I aminoacyl-tRNA synthetases"/>
    <property type="match status" value="1"/>
</dbReference>
<dbReference type="SUPFAM" id="SSF55190">
    <property type="entry name" value="Arginyl-tRNA synthetase (ArgRS), N-terminal 'additional' domain"/>
    <property type="match status" value="1"/>
</dbReference>
<dbReference type="SUPFAM" id="SSF52374">
    <property type="entry name" value="Nucleotidylyl transferase"/>
    <property type="match status" value="1"/>
</dbReference>
<dbReference type="PROSITE" id="PS00178">
    <property type="entry name" value="AA_TRNA_LIGASE_I"/>
    <property type="match status" value="1"/>
</dbReference>
<sequence>MNIFNQLKQDIIAASRQLYNNQEIANIVTIETSKDNFNGDLSSNIAMIIAAKENMPPRTVALKFKEILITLPYIASIEIAGPGFINFTIKAESWQIAIKNILQHEGKFFEIDIDKNKYINIEYVSANPTGPMHIGHARGAVYGDVLARILQKVGYNVTKEYYVNDAGSQINDLVSTVLLRYREALGEKITIPVGLYPGEYLIPVGQILVKEYGNKLLVMDEEERFKIVKNFAVEKMLDLNRKDLEELGIKHDLFFSEQSLHDKGKIEEIVKLLTNMGLIYEGTLPAPKGKIHAKWDNRVQKLFKSTKYGDSQDRPIEKADGSWSYFASDLAYAKDKIDRGANHLIYVLGADHSGYVKRIEAIVKALGKEQIKVDVKICQLVNFIENGVPVKMSKRLGNFASVQDVNHEVGKDIIRFMMLTRQNDKPLDFDLVKVKEQSRENPIFYVQYAHVRTVSILSKAMELMPESYSSFEAGIYDLSLLSSEEEIDIIKLLAAWTKTLEVSAKYFEPHRIALYLINLASKFHSIWNFGKENSDYRFVIENNKELTTARLALAKAIQKVIASGFEVIGVEPMNKM</sequence>
<proteinExistence type="inferred from homology"/>
<reference key="1">
    <citation type="submission" date="2007-09" db="EMBL/GenBank/DDBJ databases">
        <title>Complete genome sequence of Rickettsia canadensis.</title>
        <authorList>
            <person name="Madan A."/>
            <person name="Fahey J."/>
            <person name="Helton E."/>
            <person name="Ketteman M."/>
            <person name="Madan A."/>
            <person name="Rodrigues S."/>
            <person name="Sanchez A."/>
            <person name="Whiting M."/>
            <person name="Dasch G."/>
            <person name="Eremeeva M."/>
        </authorList>
    </citation>
    <scope>NUCLEOTIDE SEQUENCE [LARGE SCALE GENOMIC DNA]</scope>
    <source>
        <strain>McKiel</strain>
    </source>
</reference>
<gene>
    <name evidence="1" type="primary">argS</name>
    <name type="ordered locus">A1E_00310</name>
</gene>
<feature type="chain" id="PRO_1000018106" description="Arginine--tRNA ligase">
    <location>
        <begin position="1"/>
        <end position="576"/>
    </location>
</feature>
<feature type="short sequence motif" description="'HIGH' region">
    <location>
        <begin position="126"/>
        <end position="136"/>
    </location>
</feature>
<organism>
    <name type="scientific">Rickettsia canadensis (strain McKiel)</name>
    <dbReference type="NCBI Taxonomy" id="293613"/>
    <lineage>
        <taxon>Bacteria</taxon>
        <taxon>Pseudomonadati</taxon>
        <taxon>Pseudomonadota</taxon>
        <taxon>Alphaproteobacteria</taxon>
        <taxon>Rickettsiales</taxon>
        <taxon>Rickettsiaceae</taxon>
        <taxon>Rickettsieae</taxon>
        <taxon>Rickettsia</taxon>
        <taxon>belli group</taxon>
    </lineage>
</organism>